<dbReference type="EMBL" id="AY383616">
    <property type="protein sequence ID" value="AAQ84304.1"/>
    <property type="status" value="ALT_SEQ"/>
    <property type="molecule type" value="mRNA"/>
</dbReference>
<dbReference type="EMBL" id="AK031400">
    <property type="protein sequence ID" value="BAC27388.1"/>
    <property type="molecule type" value="mRNA"/>
</dbReference>
<dbReference type="EMBL" id="AK041994">
    <property type="protein sequence ID" value="BAC31127.2"/>
    <property type="molecule type" value="mRNA"/>
</dbReference>
<dbReference type="EMBL" id="BC036561">
    <property type="status" value="NOT_ANNOTATED_CDS"/>
    <property type="molecule type" value="mRNA"/>
</dbReference>
<dbReference type="CCDS" id="CCDS15634.1"/>
<dbReference type="RefSeq" id="NP_694777.3">
    <property type="nucleotide sequence ID" value="NM_153137.4"/>
</dbReference>
<dbReference type="SMR" id="Q8C0G2"/>
<dbReference type="BioGRID" id="229607">
    <property type="interactions" value="5"/>
</dbReference>
<dbReference type="FunCoup" id="Q8C0G2">
    <property type="interactions" value="409"/>
</dbReference>
<dbReference type="STRING" id="10090.ENSMUSP00000040977"/>
<dbReference type="MEROPS" id="S01.372"/>
<dbReference type="iPTMnet" id="Q8C0G2"/>
<dbReference type="PhosphoSitePlus" id="Q8C0G2"/>
<dbReference type="PaxDb" id="10090-ENSMUSP00000040977"/>
<dbReference type="ProteomicsDB" id="254640"/>
<dbReference type="DNASU" id="215243"/>
<dbReference type="GeneID" id="215243"/>
<dbReference type="KEGG" id="mmu:215243"/>
<dbReference type="AGR" id="MGI:2441706"/>
<dbReference type="CTD" id="80342"/>
<dbReference type="MGI" id="MGI:2441706">
    <property type="gene designation" value="Traf3ip3"/>
</dbReference>
<dbReference type="eggNOG" id="ENOG502RG0V">
    <property type="taxonomic scope" value="Eukaryota"/>
</dbReference>
<dbReference type="InParanoid" id="Q8C0G2"/>
<dbReference type="OrthoDB" id="8886722at2759"/>
<dbReference type="PhylomeDB" id="Q8C0G2"/>
<dbReference type="BioGRID-ORCS" id="215243">
    <property type="hits" value="2 hits in 77 CRISPR screens"/>
</dbReference>
<dbReference type="ChiTaRS" id="Traf3ip3">
    <property type="organism name" value="mouse"/>
</dbReference>
<dbReference type="PRO" id="PR:Q8C0G2"/>
<dbReference type="Proteomes" id="UP000000589">
    <property type="component" value="Unplaced"/>
</dbReference>
<dbReference type="RNAct" id="Q8C0G2">
    <property type="molecule type" value="protein"/>
</dbReference>
<dbReference type="GO" id="GO:0005789">
    <property type="term" value="C:endoplasmic reticulum membrane"/>
    <property type="evidence" value="ECO:0000266"/>
    <property type="project" value="MGI"/>
</dbReference>
<dbReference type="GO" id="GO:0000139">
    <property type="term" value="C:Golgi membrane"/>
    <property type="evidence" value="ECO:0000266"/>
    <property type="project" value="MGI"/>
</dbReference>
<dbReference type="GO" id="GO:0005765">
    <property type="term" value="C:lysosomal membrane"/>
    <property type="evidence" value="ECO:0007669"/>
    <property type="project" value="UniProtKB-SubCell"/>
</dbReference>
<dbReference type="GO" id="GO:0031966">
    <property type="term" value="C:mitochondrial membrane"/>
    <property type="evidence" value="ECO:0000266"/>
    <property type="project" value="MGI"/>
</dbReference>
<dbReference type="GO" id="GO:0005741">
    <property type="term" value="C:mitochondrial outer membrane"/>
    <property type="evidence" value="ECO:0007669"/>
    <property type="project" value="UniProtKB-SubCell"/>
</dbReference>
<dbReference type="GO" id="GO:0005886">
    <property type="term" value="C:plasma membrane"/>
    <property type="evidence" value="ECO:0007669"/>
    <property type="project" value="UniProtKB-SubCell"/>
</dbReference>
<dbReference type="GO" id="GO:0044198">
    <property type="term" value="F:zf-TRAF domain binding"/>
    <property type="evidence" value="ECO:0000266"/>
    <property type="project" value="MGI"/>
</dbReference>
<dbReference type="GO" id="GO:0140374">
    <property type="term" value="P:antiviral innate immune response"/>
    <property type="evidence" value="ECO:0000315"/>
    <property type="project" value="MGI"/>
</dbReference>
<dbReference type="GO" id="GO:0035457">
    <property type="term" value="P:cellular response to interferon-alpha"/>
    <property type="evidence" value="ECO:0000315"/>
    <property type="project" value="MGI"/>
</dbReference>
<dbReference type="GO" id="GO:0035458">
    <property type="term" value="P:cellular response to interferon-beta"/>
    <property type="evidence" value="ECO:0000315"/>
    <property type="project" value="MGI"/>
</dbReference>
<dbReference type="GO" id="GO:0032727">
    <property type="term" value="P:positive regulation of interferon-alpha production"/>
    <property type="evidence" value="ECO:0000315"/>
    <property type="project" value="MGI"/>
</dbReference>
<dbReference type="GO" id="GO:0032728">
    <property type="term" value="P:positive regulation of interferon-beta production"/>
    <property type="evidence" value="ECO:0000315"/>
    <property type="project" value="MGI"/>
</dbReference>
<dbReference type="CDD" id="cd21912">
    <property type="entry name" value="CC1_T3JAM"/>
    <property type="match status" value="1"/>
</dbReference>
<dbReference type="InterPro" id="IPR051176">
    <property type="entry name" value="Cent_Immune-Sig_Mod"/>
</dbReference>
<dbReference type="PANTHER" id="PTHR15715">
    <property type="entry name" value="CENTROSOMAL PROTEIN OF 170 KDA"/>
    <property type="match status" value="1"/>
</dbReference>
<dbReference type="PANTHER" id="PTHR15715:SF21">
    <property type="entry name" value="TRAF3-INTERACTING JNK-ACTIVATING MODULATOR"/>
    <property type="match status" value="1"/>
</dbReference>
<sequence>MISSDSRSSPGLARWAESYEAKCERRQETRENRRRRRNETTCRQPGKVLRTQHKERLQGARQLQFLKRRNLEEEKKGQAREQGPSSKTDGGTGQVSILKESLPGANKASFPGQQETGISSEVFPALHHSSSGIQRDLGGHHASHGRAFPPQDSDIKKPHRQHRGTQTKAEEALPTIKNDASQQTNCGVAVLDKDIIQLSEYLKEALHRELILKKKMVILQDLLPALIRASDSSWKGQLNEDKLKGKLRSLENQLYTCLQKHSPWGMKKVLLEMEDQRSSYEQKAKASLQKVLEEKMCAEQQLQRAQLSLALAEQKCQEWKSQYEALKEDWRTLGDQHRELESQLHVLQSKLQGADSRDSQMSQALQLLENEHQELQTKLESLQGDGEQQSSETQDLQDQLKKSEEEKQALVSKVQQLQSLLQNQSLQLQEQEKLLKKDQGLPVWNPKLSLDEVKPEGTRKEKEEELRDQLQKETFQLQVKENELQCGQWLPVLMVVIATALAVFLANKGNLVI</sequence>
<reference key="1">
    <citation type="journal article" date="2003" name="FEBS Lett.">
        <title>T3JAM, a novel protein that specifically interacts with TRAF3 and promotes the activation of JNK.</title>
        <authorList>
            <person name="Dadgostar H."/>
            <person name="Doyle S.E."/>
            <person name="Shahangian A."/>
            <person name="Garcia D.E."/>
            <person name="Cheng G."/>
        </authorList>
    </citation>
    <scope>NUCLEOTIDE SEQUENCE [MRNA]</scope>
    <scope>TISSUE SPECIFICITY</scope>
    <scope>INTERACTION WITH TRAF3</scope>
    <source>
        <strain>C57BL/6J</strain>
    </source>
</reference>
<reference key="2">
    <citation type="journal article" date="2005" name="Science">
        <title>The transcriptional landscape of the mammalian genome.</title>
        <authorList>
            <person name="Carninci P."/>
            <person name="Kasukawa T."/>
            <person name="Katayama S."/>
            <person name="Gough J."/>
            <person name="Frith M.C."/>
            <person name="Maeda N."/>
            <person name="Oyama R."/>
            <person name="Ravasi T."/>
            <person name="Lenhard B."/>
            <person name="Wells C."/>
            <person name="Kodzius R."/>
            <person name="Shimokawa K."/>
            <person name="Bajic V.B."/>
            <person name="Brenner S.E."/>
            <person name="Batalov S."/>
            <person name="Forrest A.R."/>
            <person name="Zavolan M."/>
            <person name="Davis M.J."/>
            <person name="Wilming L.G."/>
            <person name="Aidinis V."/>
            <person name="Allen J.E."/>
            <person name="Ambesi-Impiombato A."/>
            <person name="Apweiler R."/>
            <person name="Aturaliya R.N."/>
            <person name="Bailey T.L."/>
            <person name="Bansal M."/>
            <person name="Baxter L."/>
            <person name="Beisel K.W."/>
            <person name="Bersano T."/>
            <person name="Bono H."/>
            <person name="Chalk A.M."/>
            <person name="Chiu K.P."/>
            <person name="Choudhary V."/>
            <person name="Christoffels A."/>
            <person name="Clutterbuck D.R."/>
            <person name="Crowe M.L."/>
            <person name="Dalla E."/>
            <person name="Dalrymple B.P."/>
            <person name="de Bono B."/>
            <person name="Della Gatta G."/>
            <person name="di Bernardo D."/>
            <person name="Down T."/>
            <person name="Engstrom P."/>
            <person name="Fagiolini M."/>
            <person name="Faulkner G."/>
            <person name="Fletcher C.F."/>
            <person name="Fukushima T."/>
            <person name="Furuno M."/>
            <person name="Futaki S."/>
            <person name="Gariboldi M."/>
            <person name="Georgii-Hemming P."/>
            <person name="Gingeras T.R."/>
            <person name="Gojobori T."/>
            <person name="Green R.E."/>
            <person name="Gustincich S."/>
            <person name="Harbers M."/>
            <person name="Hayashi Y."/>
            <person name="Hensch T.K."/>
            <person name="Hirokawa N."/>
            <person name="Hill D."/>
            <person name="Huminiecki L."/>
            <person name="Iacono M."/>
            <person name="Ikeo K."/>
            <person name="Iwama A."/>
            <person name="Ishikawa T."/>
            <person name="Jakt M."/>
            <person name="Kanapin A."/>
            <person name="Katoh M."/>
            <person name="Kawasawa Y."/>
            <person name="Kelso J."/>
            <person name="Kitamura H."/>
            <person name="Kitano H."/>
            <person name="Kollias G."/>
            <person name="Krishnan S.P."/>
            <person name="Kruger A."/>
            <person name="Kummerfeld S.K."/>
            <person name="Kurochkin I.V."/>
            <person name="Lareau L.F."/>
            <person name="Lazarevic D."/>
            <person name="Lipovich L."/>
            <person name="Liu J."/>
            <person name="Liuni S."/>
            <person name="McWilliam S."/>
            <person name="Madan Babu M."/>
            <person name="Madera M."/>
            <person name="Marchionni L."/>
            <person name="Matsuda H."/>
            <person name="Matsuzawa S."/>
            <person name="Miki H."/>
            <person name="Mignone F."/>
            <person name="Miyake S."/>
            <person name="Morris K."/>
            <person name="Mottagui-Tabar S."/>
            <person name="Mulder N."/>
            <person name="Nakano N."/>
            <person name="Nakauchi H."/>
            <person name="Ng P."/>
            <person name="Nilsson R."/>
            <person name="Nishiguchi S."/>
            <person name="Nishikawa S."/>
            <person name="Nori F."/>
            <person name="Ohara O."/>
            <person name="Okazaki Y."/>
            <person name="Orlando V."/>
            <person name="Pang K.C."/>
            <person name="Pavan W.J."/>
            <person name="Pavesi G."/>
            <person name="Pesole G."/>
            <person name="Petrovsky N."/>
            <person name="Piazza S."/>
            <person name="Reed J."/>
            <person name="Reid J.F."/>
            <person name="Ring B.Z."/>
            <person name="Ringwald M."/>
            <person name="Rost B."/>
            <person name="Ruan Y."/>
            <person name="Salzberg S.L."/>
            <person name="Sandelin A."/>
            <person name="Schneider C."/>
            <person name="Schoenbach C."/>
            <person name="Sekiguchi K."/>
            <person name="Semple C.A."/>
            <person name="Seno S."/>
            <person name="Sessa L."/>
            <person name="Sheng Y."/>
            <person name="Shibata Y."/>
            <person name="Shimada H."/>
            <person name="Shimada K."/>
            <person name="Silva D."/>
            <person name="Sinclair B."/>
            <person name="Sperling S."/>
            <person name="Stupka E."/>
            <person name="Sugiura K."/>
            <person name="Sultana R."/>
            <person name="Takenaka Y."/>
            <person name="Taki K."/>
            <person name="Tammoja K."/>
            <person name="Tan S.L."/>
            <person name="Tang S."/>
            <person name="Taylor M.S."/>
            <person name="Tegner J."/>
            <person name="Teichmann S.A."/>
            <person name="Ueda H.R."/>
            <person name="van Nimwegen E."/>
            <person name="Verardo R."/>
            <person name="Wei C.L."/>
            <person name="Yagi K."/>
            <person name="Yamanishi H."/>
            <person name="Zabarovsky E."/>
            <person name="Zhu S."/>
            <person name="Zimmer A."/>
            <person name="Hide W."/>
            <person name="Bult C."/>
            <person name="Grimmond S.M."/>
            <person name="Teasdale R.D."/>
            <person name="Liu E.T."/>
            <person name="Brusic V."/>
            <person name="Quackenbush J."/>
            <person name="Wahlestedt C."/>
            <person name="Mattick J.S."/>
            <person name="Hume D.A."/>
            <person name="Kai C."/>
            <person name="Sasaki D."/>
            <person name="Tomaru Y."/>
            <person name="Fukuda S."/>
            <person name="Kanamori-Katayama M."/>
            <person name="Suzuki M."/>
            <person name="Aoki J."/>
            <person name="Arakawa T."/>
            <person name="Iida J."/>
            <person name="Imamura K."/>
            <person name="Itoh M."/>
            <person name="Kato T."/>
            <person name="Kawaji H."/>
            <person name="Kawagashira N."/>
            <person name="Kawashima T."/>
            <person name="Kojima M."/>
            <person name="Kondo S."/>
            <person name="Konno H."/>
            <person name="Nakano K."/>
            <person name="Ninomiya N."/>
            <person name="Nishio T."/>
            <person name="Okada M."/>
            <person name="Plessy C."/>
            <person name="Shibata K."/>
            <person name="Shiraki T."/>
            <person name="Suzuki S."/>
            <person name="Tagami M."/>
            <person name="Waki K."/>
            <person name="Watahiki A."/>
            <person name="Okamura-Oho Y."/>
            <person name="Suzuki H."/>
            <person name="Kawai J."/>
            <person name="Hayashizaki Y."/>
        </authorList>
    </citation>
    <scope>NUCLEOTIDE SEQUENCE [LARGE SCALE MRNA]</scope>
    <source>
        <strain>C57BL/6J</strain>
        <tissue>Testis</tissue>
        <tissue>Thymus</tissue>
    </source>
</reference>
<reference key="3">
    <citation type="journal article" date="2004" name="Genome Res.">
        <title>The status, quality, and expansion of the NIH full-length cDNA project: the Mammalian Gene Collection (MGC).</title>
        <authorList>
            <consortium name="The MGC Project Team"/>
        </authorList>
    </citation>
    <scope>NUCLEOTIDE SEQUENCE [LARGE SCALE MRNA]</scope>
    <source>
        <strain>C57BL/6J</strain>
        <tissue>Mammary gland</tissue>
    </source>
</reference>
<reference key="4">
    <citation type="journal article" date="2010" name="Cell">
        <title>A tissue-specific atlas of mouse protein phosphorylation and expression.</title>
        <authorList>
            <person name="Huttlin E.L."/>
            <person name="Jedrychowski M.P."/>
            <person name="Elias J.E."/>
            <person name="Goswami T."/>
            <person name="Rad R."/>
            <person name="Beausoleil S.A."/>
            <person name="Villen J."/>
            <person name="Haas W."/>
            <person name="Sowa M.E."/>
            <person name="Gygi S.P."/>
        </authorList>
    </citation>
    <scope>IDENTIFICATION BY MASS SPECTROMETRY [LARGE SCALE ANALYSIS]</scope>
    <source>
        <tissue>Lung</tissue>
        <tissue>Spleen</tissue>
    </source>
</reference>
<reference key="5">
    <citation type="journal article" date="2015" name="J. Exp. Med.">
        <title>T cell development involves TRAF3IP3-mediated ERK signaling in the Golgi.</title>
        <authorList>
            <person name="Zou Q."/>
            <person name="Jin J."/>
            <person name="Xiao Y."/>
            <person name="Hu H."/>
            <person name="Zhou X."/>
            <person name="Jie Z."/>
            <person name="Xie X."/>
            <person name="Li J.Y."/>
            <person name="Cheng X."/>
            <person name="Sun S.C."/>
        </authorList>
    </citation>
    <scope>FUNCTION</scope>
    <scope>SUBCELLULAR LOCATION</scope>
    <scope>DISRUPTION PHENOTYPE</scope>
</reference>
<reference key="6">
    <citation type="journal article" date="2018" name="J. Exp. Med.">
        <title>Metabolic control of regulatory T cell stability and function by TRAF3IP3 at the lysosome.</title>
        <authorList>
            <person name="Yu X."/>
            <person name="Teng X.L."/>
            <person name="Wang F."/>
            <person name="Zheng Y."/>
            <person name="Qu G."/>
            <person name="Zhou Y."/>
            <person name="Hu Z."/>
            <person name="Wu Z."/>
            <person name="Chang Y."/>
            <person name="Chen L."/>
            <person name="Li H.B."/>
            <person name="Su B."/>
            <person name="Lu L."/>
            <person name="Liu Z."/>
            <person name="Sun S.C."/>
            <person name="Zou Q."/>
        </authorList>
    </citation>
    <scope>FUNCTION</scope>
    <scope>DISRUPTION PHENOTYPE</scope>
    <scope>SUBCELLULAR LOCATION</scope>
    <scope>INTERACTION WITH PPP2CA</scope>
</reference>
<reference key="7">
    <citation type="journal article" date="2019" name="EMBO J.">
        <title>TRAF3IP3 mediates the recruitment of TRAF3 to MAVS for antiviral innate immunity.</title>
        <authorList>
            <person name="Zhu W."/>
            <person name="Li J."/>
            <person name="Zhang R."/>
            <person name="Cai Y."/>
            <person name="Wang C."/>
            <person name="Qi S."/>
            <person name="Chen S."/>
            <person name="Liang X."/>
            <person name="Qi N."/>
            <person name="Hou F."/>
        </authorList>
    </citation>
    <scope>FUNCTION</scope>
    <scope>DISRUPTION PHENOTYPE</scope>
</reference>
<accession>Q8C0G2</accession>
<accession>Q8BY50</accession>
<accession>Q8K1Y9</accession>
<organism>
    <name type="scientific">Mus musculus</name>
    <name type="common">Mouse</name>
    <dbReference type="NCBI Taxonomy" id="10090"/>
    <lineage>
        <taxon>Eukaryota</taxon>
        <taxon>Metazoa</taxon>
        <taxon>Chordata</taxon>
        <taxon>Craniata</taxon>
        <taxon>Vertebrata</taxon>
        <taxon>Euteleostomi</taxon>
        <taxon>Mammalia</taxon>
        <taxon>Eutheria</taxon>
        <taxon>Euarchontoglires</taxon>
        <taxon>Glires</taxon>
        <taxon>Rodentia</taxon>
        <taxon>Myomorpha</taxon>
        <taxon>Muroidea</taxon>
        <taxon>Muridae</taxon>
        <taxon>Murinae</taxon>
        <taxon>Mus</taxon>
        <taxon>Mus</taxon>
    </lineage>
</organism>
<keyword id="KW-1003">Cell membrane</keyword>
<keyword id="KW-0175">Coiled coil</keyword>
<keyword id="KW-0333">Golgi apparatus</keyword>
<keyword id="KW-0458">Lysosome</keyword>
<keyword id="KW-0472">Membrane</keyword>
<keyword id="KW-0496">Mitochondrion</keyword>
<keyword id="KW-1000">Mitochondrion outer membrane</keyword>
<keyword id="KW-1185">Reference proteome</keyword>
<keyword id="KW-0812">Transmembrane</keyword>
<keyword id="KW-1133">Transmembrane helix</keyword>
<evidence type="ECO:0000250" key="1">
    <source>
        <dbReference type="UniProtKB" id="Q9Y228"/>
    </source>
</evidence>
<evidence type="ECO:0000255" key="2"/>
<evidence type="ECO:0000256" key="3">
    <source>
        <dbReference type="SAM" id="MobiDB-lite"/>
    </source>
</evidence>
<evidence type="ECO:0000269" key="4">
    <source>
    </source>
</evidence>
<evidence type="ECO:0000269" key="5">
    <source>
    </source>
</evidence>
<evidence type="ECO:0000269" key="6">
    <source>
    </source>
</evidence>
<evidence type="ECO:0000269" key="7">
    <source>
    </source>
</evidence>
<evidence type="ECO:0000305" key="8"/>
<gene>
    <name type="primary">Traf3ip3</name>
    <name type="synonym">T3jam</name>
</gene>
<protein>
    <recommendedName>
        <fullName>TRAF3-interacting JNK-activating modulator</fullName>
    </recommendedName>
    <alternativeName>
        <fullName>TRAF3-interacting protein 3</fullName>
    </alternativeName>
</protein>
<name>T3JAM_MOUSE</name>
<proteinExistence type="evidence at protein level"/>
<feature type="chain" id="PRO_0000072404" description="TRAF3-interacting JNK-activating modulator">
    <location>
        <begin position="1"/>
        <end position="513"/>
    </location>
</feature>
<feature type="topological domain" description="Cytoplasmic" evidence="2">
    <location>
        <begin position="1"/>
        <end position="485"/>
    </location>
</feature>
<feature type="transmembrane region" description="Helical; Anchor for type IV membrane protein" evidence="2">
    <location>
        <begin position="486"/>
        <end position="506"/>
    </location>
</feature>
<feature type="topological domain" description="Extracellular" evidence="2">
    <location>
        <begin position="507"/>
        <end position="513"/>
    </location>
</feature>
<feature type="region of interest" description="Disordered" evidence="3">
    <location>
        <begin position="1"/>
        <end position="96"/>
    </location>
</feature>
<feature type="region of interest" description="Disordered" evidence="3">
    <location>
        <begin position="130"/>
        <end position="171"/>
    </location>
</feature>
<feature type="region of interest" description="Disordered" evidence="3">
    <location>
        <begin position="381"/>
        <end position="402"/>
    </location>
</feature>
<feature type="coiled-coil region" evidence="2">
    <location>
        <begin position="266"/>
        <end position="488"/>
    </location>
</feature>
<feature type="compositionally biased region" description="Basic and acidic residues" evidence="3">
    <location>
        <begin position="17"/>
        <end position="31"/>
    </location>
</feature>
<feature type="compositionally biased region" description="Basic and acidic residues" evidence="3">
    <location>
        <begin position="69"/>
        <end position="79"/>
    </location>
</feature>
<feature type="compositionally biased region" description="Polar residues" evidence="3">
    <location>
        <begin position="386"/>
        <end position="397"/>
    </location>
</feature>
<feature type="sequence conflict" description="In Ref. 2; BAC27388/BAC31127." evidence="8" ref="2">
    <original>N</original>
    <variation>K</variation>
    <location>
        <position position="185"/>
    </location>
</feature>
<feature type="sequence conflict" description="In Ref. 2; BAC27388." evidence="8" ref="2">
    <original>D</original>
    <variation>G</variation>
    <location>
        <position position="355"/>
    </location>
</feature>
<comment type="function">
    <text evidence="1 5 6">Adapter protein that plays essential roles in both innate and adaptive immunity. Plays a crucial role in the regulation of thymocyte development (PubMed:26195727). Mechanistically, mediates TCR-stimulated activation through recruiting MAP2K1/MEK1 to the Golgi and, thereby, facilitating the interaction of MAP2K1/MEK1 with its activator BRAF (PubMed:26195727). Also plays an essential role in regulatory T-cell stability and function by recruiting the serine-threonine phosphatase catalytic subunit (PPP2CA) to the lysosome, thereby facilitating the interaction of PP2Ac with the mTORC1 component RPTOR and restricting glycolytic metabolism (PubMed:30115741). Positively regulates TLR4 signaling activity in macrophage-mediated inflammation by acting as a molecular clamp to facilitate LPS-induced translocation of TLR4 to lipid rafts (PubMed:30115741). In response to viral infection, facilitates the recruitment of TRAF3 to MAVS within mitochondria leading to IRF3 activation and interferon production (PubMed:30115741). However, participates in the maintenance of immune homeostasis and the prevention of overzealous innate immunity by promoting 'Lys-48'-dependent ubiquitination of TBK1 (By similarity).</text>
</comment>
<comment type="subunit">
    <text evidence="1">Interacts (via its coiled-coil domain) with TRAF3 (via isoleucine zipper). Interacts with MAP2K1 (By similarity). Interacts with PPP2CA; this interaction targets PPP2CA to the lysosomes (By similarity). Interacts with MAVS (By similarity). Interacts with TBK1 (By similarity).</text>
</comment>
<comment type="subcellular location">
    <subcellularLocation>
        <location evidence="1">Cell membrane</location>
    </subcellularLocation>
    <subcellularLocation>
        <location evidence="5">Golgi apparatus membrane</location>
        <topology evidence="8">Single-pass type IV membrane protein</topology>
    </subcellularLocation>
    <subcellularLocation>
        <location evidence="6">Lysosome membrane</location>
    </subcellularLocation>
    <subcellularLocation>
        <location evidence="1">Mitochondrion outer membrane</location>
    </subcellularLocation>
    <text evidence="1">Accumulates on the mitochondria after virus infection.</text>
</comment>
<comment type="tissue specificity">
    <text evidence="4">Expressed in bone marrow, spleen and thymus. Not detected in heart, kidney and liver.</text>
</comment>
<comment type="disruption phenotype">
    <text evidence="5 6 7">Knockout mice have considerably lower frequencies of CD4(+) and CD8(+) single positive thymocytes, and concomitantly higher frequencies of double positive thymocytes (PubMed:26195727). TRAF3IP3 deletion also affects regulatory T-cell transcriptional programs and stability (PubMed:30115741). In addition, mice show a severely compromised potential to induce interferon production and are vulnerable to RNA virus infection (PubMed:31390091).</text>
</comment>
<comment type="sequence caution" evidence="8">
    <conflict type="frameshift">
        <sequence resource="EMBL-CDS" id="AAQ84304"/>
    </conflict>
</comment>
<comment type="sequence caution" evidence="8">
    <conflict type="miscellaneous discrepancy">
        <sequence resource="EMBL-CDS" id="AAQ84304"/>
    </conflict>
    <text>Sequencing errors.</text>
</comment>